<protein>
    <recommendedName>
        <fullName evidence="5">Coiled-coil domain-containing protein 9</fullName>
    </recommendedName>
</protein>
<feature type="chain" id="PRO_0000089403" description="Coiled-coil domain-containing protein 9">
    <location>
        <begin position="1"/>
        <end position="531"/>
    </location>
</feature>
<feature type="region of interest" description="Disordered" evidence="3">
    <location>
        <begin position="40"/>
        <end position="531"/>
    </location>
</feature>
<feature type="coiled-coil region" evidence="2">
    <location>
        <begin position="149"/>
        <end position="185"/>
    </location>
</feature>
<feature type="compositionally biased region" description="Basic and acidic residues" evidence="3">
    <location>
        <begin position="59"/>
        <end position="72"/>
    </location>
</feature>
<feature type="compositionally biased region" description="Basic and acidic residues" evidence="3">
    <location>
        <begin position="148"/>
        <end position="185"/>
    </location>
</feature>
<feature type="compositionally biased region" description="Basic and acidic residues" evidence="3">
    <location>
        <begin position="194"/>
        <end position="217"/>
    </location>
</feature>
<feature type="compositionally biased region" description="Basic and acidic residues" evidence="3">
    <location>
        <begin position="227"/>
        <end position="241"/>
    </location>
</feature>
<feature type="compositionally biased region" description="Basic and acidic residues" evidence="3">
    <location>
        <begin position="258"/>
        <end position="279"/>
    </location>
</feature>
<feature type="compositionally biased region" description="Basic and acidic residues" evidence="3">
    <location>
        <begin position="289"/>
        <end position="302"/>
    </location>
</feature>
<feature type="compositionally biased region" description="Basic and acidic residues" evidence="3">
    <location>
        <begin position="311"/>
        <end position="320"/>
    </location>
</feature>
<feature type="compositionally biased region" description="Basic and acidic residues" evidence="3">
    <location>
        <begin position="361"/>
        <end position="372"/>
    </location>
</feature>
<feature type="compositionally biased region" description="Low complexity" evidence="3">
    <location>
        <begin position="386"/>
        <end position="395"/>
    </location>
</feature>
<feature type="compositionally biased region" description="Pro residues" evidence="3">
    <location>
        <begin position="396"/>
        <end position="406"/>
    </location>
</feature>
<feature type="compositionally biased region" description="Acidic residues" evidence="3">
    <location>
        <begin position="411"/>
        <end position="446"/>
    </location>
</feature>
<feature type="modified residue" description="Phosphoserine" evidence="12 14">
    <location>
        <position position="80"/>
    </location>
</feature>
<feature type="modified residue" description="Phosphothreonine" evidence="10">
    <location>
        <position position="95"/>
    </location>
</feature>
<feature type="modified residue" description="Omega-N-methylarginine" evidence="1">
    <location>
        <position position="107"/>
    </location>
</feature>
<feature type="modified residue" description="Phosphoserine" evidence="12">
    <location>
        <position position="111"/>
    </location>
</feature>
<feature type="modified residue" description="Omega-N-methylarginine" evidence="1">
    <location>
        <position position="121"/>
    </location>
</feature>
<feature type="modified residue" description="Omega-N-methylarginine" evidence="1">
    <location>
        <position position="128"/>
    </location>
</feature>
<feature type="modified residue" description="Omega-N-methylarginine" evidence="1">
    <location>
        <position position="130"/>
    </location>
</feature>
<feature type="modified residue" description="Asymmetric dimethylarginine" evidence="13">
    <location>
        <position position="131"/>
    </location>
</feature>
<feature type="modified residue" description="Asymmetric dimethylarginine" evidence="13">
    <location>
        <position position="133"/>
    </location>
</feature>
<feature type="modified residue" description="Asymmetric dimethylarginine" evidence="13">
    <location>
        <position position="135"/>
    </location>
</feature>
<feature type="modified residue" description="Phosphoserine" evidence="12">
    <location>
        <position position="137"/>
    </location>
</feature>
<feature type="modified residue" description="Phosphoserine" evidence="8 10 12">
    <location>
        <position position="202"/>
    </location>
</feature>
<feature type="modified residue" description="Phosphoserine" evidence="12">
    <location>
        <position position="248"/>
    </location>
</feature>
<feature type="modified residue" description="Phosphoserine" evidence="12">
    <location>
        <position position="255"/>
    </location>
</feature>
<feature type="modified residue" description="Phosphoserine" evidence="12">
    <location>
        <position position="376"/>
    </location>
</feature>
<feature type="modified residue" description="Phosphoserine" evidence="12">
    <location>
        <position position="386"/>
    </location>
</feature>
<feature type="modified residue" description="Phosphoserine" evidence="12">
    <location>
        <position position="390"/>
    </location>
</feature>
<feature type="modified residue" description="Phosphoserine" evidence="8 9 10 11 12">
    <location>
        <position position="521"/>
    </location>
</feature>
<feature type="sequence variant" id="VAR_033670" description="In dbSNP:rs2032811.">
    <original>E</original>
    <variation>D</variation>
    <location>
        <position position="215"/>
    </location>
</feature>
<feature type="sequence variant" id="VAR_033671" description="In dbSNP:rs35119724.">
    <original>A</original>
    <variation>V</variation>
    <location>
        <position position="456"/>
    </location>
</feature>
<feature type="sequence variant" id="VAR_050767" description="In dbSNP:rs888836.">
    <original>L</original>
    <variation>P</variation>
    <location>
        <position position="478"/>
    </location>
</feature>
<reference key="1">
    <citation type="journal article" date="2001" name="Genome Res.">
        <title>Towards a catalog of human genes and proteins: sequencing and analysis of 500 novel complete protein coding human cDNAs.</title>
        <authorList>
            <person name="Wiemann S."/>
            <person name="Weil B."/>
            <person name="Wellenreuther R."/>
            <person name="Gassenhuber J."/>
            <person name="Glassl S."/>
            <person name="Ansorge W."/>
            <person name="Boecher M."/>
            <person name="Bloecker H."/>
            <person name="Bauersachs S."/>
            <person name="Blum H."/>
            <person name="Lauber J."/>
            <person name="Duesterhoeft A."/>
            <person name="Beyer A."/>
            <person name="Koehrer K."/>
            <person name="Strack N."/>
            <person name="Mewes H.-W."/>
            <person name="Ottenwaelder B."/>
            <person name="Obermaier B."/>
            <person name="Tampe J."/>
            <person name="Heubner D."/>
            <person name="Wambutt R."/>
            <person name="Korn B."/>
            <person name="Klein M."/>
            <person name="Poustka A."/>
        </authorList>
    </citation>
    <scope>NUCLEOTIDE SEQUENCE [LARGE SCALE MRNA]</scope>
    <source>
        <tissue>Uterus</tissue>
    </source>
</reference>
<reference key="2">
    <citation type="journal article" date="2004" name="Genome Res.">
        <title>The status, quality, and expansion of the NIH full-length cDNA project: the Mammalian Gene Collection (MGC).</title>
        <authorList>
            <consortium name="The MGC Project Team"/>
        </authorList>
    </citation>
    <scope>NUCLEOTIDE SEQUENCE [LARGE SCALE MRNA]</scope>
    <source>
        <tissue>Skin</tissue>
    </source>
</reference>
<reference key="3">
    <citation type="journal article" date="2008" name="J. Proteome Res.">
        <title>Combining protein-based IMAC, peptide-based IMAC, and MudPIT for efficient phosphoproteomic analysis.</title>
        <authorList>
            <person name="Cantin G.T."/>
            <person name="Yi W."/>
            <person name="Lu B."/>
            <person name="Park S.K."/>
            <person name="Xu T."/>
            <person name="Lee J.-D."/>
            <person name="Yates J.R. III"/>
        </authorList>
    </citation>
    <scope>IDENTIFICATION BY MASS SPECTROMETRY [LARGE SCALE ANALYSIS]</scope>
    <source>
        <tissue>Cervix carcinoma</tissue>
    </source>
</reference>
<reference key="4">
    <citation type="journal article" date="2008" name="Proc. Natl. Acad. Sci. U.S.A.">
        <title>A quantitative atlas of mitotic phosphorylation.</title>
        <authorList>
            <person name="Dephoure N."/>
            <person name="Zhou C."/>
            <person name="Villen J."/>
            <person name="Beausoleil S.A."/>
            <person name="Bakalarski C.E."/>
            <person name="Elledge S.J."/>
            <person name="Gygi S.P."/>
        </authorList>
    </citation>
    <scope>PHOSPHORYLATION [LARGE SCALE ANALYSIS] AT SER-202 AND SER-521</scope>
    <scope>IDENTIFICATION BY MASS SPECTROMETRY [LARGE SCALE ANALYSIS]</scope>
    <source>
        <tissue>Cervix carcinoma</tissue>
    </source>
</reference>
<reference key="5">
    <citation type="journal article" date="2009" name="Anal. Chem.">
        <title>Lys-N and trypsin cover complementary parts of the phosphoproteome in a refined SCX-based approach.</title>
        <authorList>
            <person name="Gauci S."/>
            <person name="Helbig A.O."/>
            <person name="Slijper M."/>
            <person name="Krijgsveld J."/>
            <person name="Heck A.J."/>
            <person name="Mohammed S."/>
        </authorList>
    </citation>
    <scope>IDENTIFICATION BY MASS SPECTROMETRY [LARGE SCALE ANALYSIS]</scope>
</reference>
<reference key="6">
    <citation type="journal article" date="2009" name="Sci. Signal.">
        <title>Quantitative phosphoproteomic analysis of T cell receptor signaling reveals system-wide modulation of protein-protein interactions.</title>
        <authorList>
            <person name="Mayya V."/>
            <person name="Lundgren D.H."/>
            <person name="Hwang S.-I."/>
            <person name="Rezaul K."/>
            <person name="Wu L."/>
            <person name="Eng J.K."/>
            <person name="Rodionov V."/>
            <person name="Han D.K."/>
        </authorList>
    </citation>
    <scope>PHOSPHORYLATION [LARGE SCALE ANALYSIS] AT SER-521</scope>
    <scope>IDENTIFICATION BY MASS SPECTROMETRY [LARGE SCALE ANALYSIS]</scope>
    <source>
        <tissue>Leukemic T-cell</tissue>
    </source>
</reference>
<reference key="7">
    <citation type="journal article" date="2010" name="Sci. Signal.">
        <title>Quantitative phosphoproteomics reveals widespread full phosphorylation site occupancy during mitosis.</title>
        <authorList>
            <person name="Olsen J.V."/>
            <person name="Vermeulen M."/>
            <person name="Santamaria A."/>
            <person name="Kumar C."/>
            <person name="Miller M.L."/>
            <person name="Jensen L.J."/>
            <person name="Gnad F."/>
            <person name="Cox J."/>
            <person name="Jensen T.S."/>
            <person name="Nigg E.A."/>
            <person name="Brunak S."/>
            <person name="Mann M."/>
        </authorList>
    </citation>
    <scope>PHOSPHORYLATION [LARGE SCALE ANALYSIS] AT THR-95; SER-202 AND SER-521</scope>
    <scope>IDENTIFICATION BY MASS SPECTROMETRY [LARGE SCALE ANALYSIS]</scope>
    <source>
        <tissue>Cervix carcinoma</tissue>
    </source>
</reference>
<reference key="8">
    <citation type="journal article" date="2011" name="Sci. Signal.">
        <title>System-wide temporal characterization of the proteome and phosphoproteome of human embryonic stem cell differentiation.</title>
        <authorList>
            <person name="Rigbolt K.T."/>
            <person name="Prokhorova T.A."/>
            <person name="Akimov V."/>
            <person name="Henningsen J."/>
            <person name="Johansen P.T."/>
            <person name="Kratchmarova I."/>
            <person name="Kassem M."/>
            <person name="Mann M."/>
            <person name="Olsen J.V."/>
            <person name="Blagoev B."/>
        </authorList>
    </citation>
    <scope>PHOSPHORYLATION [LARGE SCALE ANALYSIS] AT SER-521</scope>
    <scope>IDENTIFICATION BY MASS SPECTROMETRY [LARGE SCALE ANALYSIS]</scope>
</reference>
<reference key="9">
    <citation type="journal article" date="2013" name="J. Proteome Res.">
        <title>Toward a comprehensive characterization of a human cancer cell phosphoproteome.</title>
        <authorList>
            <person name="Zhou H."/>
            <person name="Di Palma S."/>
            <person name="Preisinger C."/>
            <person name="Peng M."/>
            <person name="Polat A.N."/>
            <person name="Heck A.J."/>
            <person name="Mohammed S."/>
        </authorList>
    </citation>
    <scope>PHOSPHORYLATION [LARGE SCALE ANALYSIS] AT SER-80; SER-111; SER-137; SER-202; SER-248; SER-255; SER-376; SER-386; SER-390 AND SER-521</scope>
    <scope>IDENTIFICATION BY MASS SPECTROMETRY [LARGE SCALE ANALYSIS]</scope>
    <source>
        <tissue>Cervix carcinoma</tissue>
        <tissue>Erythroleukemia</tissue>
    </source>
</reference>
<reference key="10">
    <citation type="journal article" date="2014" name="J. Proteomics">
        <title>An enzyme assisted RP-RPLC approach for in-depth analysis of human liver phosphoproteome.</title>
        <authorList>
            <person name="Bian Y."/>
            <person name="Song C."/>
            <person name="Cheng K."/>
            <person name="Dong M."/>
            <person name="Wang F."/>
            <person name="Huang J."/>
            <person name="Sun D."/>
            <person name="Wang L."/>
            <person name="Ye M."/>
            <person name="Zou H."/>
        </authorList>
    </citation>
    <scope>PHOSPHORYLATION [LARGE SCALE ANALYSIS] AT SER-80</scope>
    <scope>IDENTIFICATION BY MASS SPECTROMETRY [LARGE SCALE ANALYSIS]</scope>
    <source>
        <tissue>Liver</tissue>
    </source>
</reference>
<reference key="11">
    <citation type="journal article" date="2014" name="Mol. Cell. Proteomics">
        <title>Immunoaffinity enrichment and mass spectrometry analysis of protein methylation.</title>
        <authorList>
            <person name="Guo A."/>
            <person name="Gu H."/>
            <person name="Zhou J."/>
            <person name="Mulhern D."/>
            <person name="Wang Y."/>
            <person name="Lee K.A."/>
            <person name="Yang V."/>
            <person name="Aguiar M."/>
            <person name="Kornhauser J."/>
            <person name="Jia X."/>
            <person name="Ren J."/>
            <person name="Beausoleil S.A."/>
            <person name="Silva J.C."/>
            <person name="Vemulapalli V."/>
            <person name="Bedford M.T."/>
            <person name="Comb M.J."/>
        </authorList>
    </citation>
    <scope>METHYLATION [LARGE SCALE ANALYSIS] AT ARG-131; ARG-133 AND ARG-135</scope>
    <scope>IDENTIFICATION BY MASS SPECTROMETRY [LARGE SCALE ANALYSIS]</scope>
    <source>
        <tissue>Colon carcinoma</tissue>
    </source>
</reference>
<reference key="12">
    <citation type="journal article" date="2021" name="Mol. Syst. Biol.">
        <title>hu.MAP 2.0: integration of over 15,000 proteomic experiments builds a global compendium of human multiprotein assemblies.</title>
        <authorList>
            <person name="Drew K."/>
            <person name="Wallingford J.B."/>
            <person name="Marcotte E.M."/>
        </authorList>
    </citation>
    <scope>IDENTIFICATION AS PART OF THE EXON JUNCTION COMPLEX</scope>
    <scope>FUNCTION</scope>
</reference>
<name>CCDC9_HUMAN</name>
<dbReference type="EMBL" id="AL050284">
    <property type="protein sequence ID" value="CAB43385.1"/>
    <property type="molecule type" value="mRNA"/>
</dbReference>
<dbReference type="EMBL" id="BC002787">
    <property type="protein sequence ID" value="AAH02787.1"/>
    <property type="molecule type" value="mRNA"/>
</dbReference>
<dbReference type="EMBL" id="BC009743">
    <property type="protein sequence ID" value="AAH09743.1"/>
    <property type="molecule type" value="mRNA"/>
</dbReference>
<dbReference type="CCDS" id="CCDS12698.1"/>
<dbReference type="PIR" id="T08760">
    <property type="entry name" value="T08760"/>
</dbReference>
<dbReference type="RefSeq" id="NP_056418.1">
    <property type="nucleotide sequence ID" value="NM_015603.3"/>
</dbReference>
<dbReference type="RefSeq" id="XP_016882067.1">
    <property type="nucleotide sequence ID" value="XM_017026578.2"/>
</dbReference>
<dbReference type="RefSeq" id="XP_047294540.1">
    <property type="nucleotide sequence ID" value="XM_047438584.1"/>
</dbReference>
<dbReference type="SMR" id="Q9Y3X0"/>
<dbReference type="BioGRID" id="117544">
    <property type="interactions" value="235"/>
</dbReference>
<dbReference type="FunCoup" id="Q9Y3X0">
    <property type="interactions" value="1299"/>
</dbReference>
<dbReference type="IntAct" id="Q9Y3X0">
    <property type="interactions" value="78"/>
</dbReference>
<dbReference type="MINT" id="Q9Y3X0"/>
<dbReference type="STRING" id="9606.ENSP00000221922"/>
<dbReference type="GlyGen" id="Q9Y3X0">
    <property type="glycosylation" value="2 sites, 1 O-linked glycan (1 site)"/>
</dbReference>
<dbReference type="iPTMnet" id="Q9Y3X0"/>
<dbReference type="PhosphoSitePlus" id="Q9Y3X0"/>
<dbReference type="BioMuta" id="CCDC9"/>
<dbReference type="DMDM" id="50400700"/>
<dbReference type="jPOST" id="Q9Y3X0"/>
<dbReference type="MassIVE" id="Q9Y3X0"/>
<dbReference type="PaxDb" id="9606-ENSP00000221922"/>
<dbReference type="PeptideAtlas" id="Q9Y3X0"/>
<dbReference type="ProteomicsDB" id="86083"/>
<dbReference type="Pumba" id="Q9Y3X0"/>
<dbReference type="Antibodypedia" id="31544">
    <property type="antibodies" value="107 antibodies from 20 providers"/>
</dbReference>
<dbReference type="DNASU" id="26093"/>
<dbReference type="Ensembl" id="ENST00000221922.11">
    <property type="protein sequence ID" value="ENSP00000221922.5"/>
    <property type="gene ID" value="ENSG00000105321.14"/>
</dbReference>
<dbReference type="GeneID" id="26093"/>
<dbReference type="KEGG" id="hsa:26093"/>
<dbReference type="MANE-Select" id="ENST00000221922.11">
    <property type="protein sequence ID" value="ENSP00000221922.5"/>
    <property type="RefSeq nucleotide sequence ID" value="NM_015603.3"/>
    <property type="RefSeq protein sequence ID" value="NP_056418.1"/>
</dbReference>
<dbReference type="UCSC" id="uc010xym.3">
    <property type="organism name" value="human"/>
</dbReference>
<dbReference type="AGR" id="HGNC:24560"/>
<dbReference type="CTD" id="26093"/>
<dbReference type="DisGeNET" id="26093"/>
<dbReference type="GeneCards" id="CCDC9"/>
<dbReference type="HGNC" id="HGNC:24560">
    <property type="gene designation" value="CCDC9"/>
</dbReference>
<dbReference type="HPA" id="ENSG00000105321">
    <property type="expression patterns" value="Low tissue specificity"/>
</dbReference>
<dbReference type="neXtProt" id="NX_Q9Y3X0"/>
<dbReference type="PharmGKB" id="PA134946561"/>
<dbReference type="VEuPathDB" id="HostDB:ENSG00000105321"/>
<dbReference type="eggNOG" id="ENOG502QUM9">
    <property type="taxonomic scope" value="Eukaryota"/>
</dbReference>
<dbReference type="GeneTree" id="ENSGT00530000063950"/>
<dbReference type="HOGENOM" id="CLU_037213_1_0_1"/>
<dbReference type="InParanoid" id="Q9Y3X0"/>
<dbReference type="OrthoDB" id="10058133at2759"/>
<dbReference type="PAN-GO" id="Q9Y3X0">
    <property type="GO annotations" value="0 GO annotations based on evolutionary models"/>
</dbReference>
<dbReference type="PhylomeDB" id="Q9Y3X0"/>
<dbReference type="TreeFam" id="TF336272"/>
<dbReference type="PathwayCommons" id="Q9Y3X0"/>
<dbReference type="SignaLink" id="Q9Y3X0"/>
<dbReference type="BioGRID-ORCS" id="26093">
    <property type="hits" value="129 hits in 1170 CRISPR screens"/>
</dbReference>
<dbReference type="ChiTaRS" id="CCDC9">
    <property type="organism name" value="human"/>
</dbReference>
<dbReference type="GenomeRNAi" id="26093"/>
<dbReference type="Pharos" id="Q9Y3X0">
    <property type="development level" value="Tdark"/>
</dbReference>
<dbReference type="PRO" id="PR:Q9Y3X0"/>
<dbReference type="Proteomes" id="UP000005640">
    <property type="component" value="Chromosome 19"/>
</dbReference>
<dbReference type="RNAct" id="Q9Y3X0">
    <property type="molecule type" value="protein"/>
</dbReference>
<dbReference type="Bgee" id="ENSG00000105321">
    <property type="expression patterns" value="Expressed in sural nerve and 127 other cell types or tissues"/>
</dbReference>
<dbReference type="ExpressionAtlas" id="Q9Y3X0">
    <property type="expression patterns" value="baseline and differential"/>
</dbReference>
<dbReference type="GO" id="GO:0035145">
    <property type="term" value="C:exon-exon junction complex"/>
    <property type="evidence" value="ECO:0000314"/>
    <property type="project" value="UniProtKB"/>
</dbReference>
<dbReference type="GO" id="GO:0003723">
    <property type="term" value="F:RNA binding"/>
    <property type="evidence" value="ECO:0000314"/>
    <property type="project" value="UniProtKB"/>
</dbReference>
<dbReference type="InterPro" id="IPR029336">
    <property type="entry name" value="DUF4594"/>
</dbReference>
<dbReference type="PANTHER" id="PTHR15635">
    <property type="entry name" value="COILED-COIL DOMAIN CONTAINING PROTEIN 9"/>
    <property type="match status" value="1"/>
</dbReference>
<dbReference type="PANTHER" id="PTHR15635:SF11">
    <property type="entry name" value="COILED-COIL DOMAIN-CONTAINING PROTEIN 9"/>
    <property type="match status" value="1"/>
</dbReference>
<dbReference type="Pfam" id="PF15266">
    <property type="entry name" value="DUF4594"/>
    <property type="match status" value="1"/>
</dbReference>
<sequence>MAATLDLKSKEEKDAELDKRIEALRRKNEALIRRYQEIEEDRKKAELEGVAVTAPRKGRSVEKENVAVESEKNLGPSRRSPGTPRPPGASKGGRTPPQQGGRAGMGRASRSWEGSPGEQPRGGGAGGRGRRGRGRGSPHLSGAGDTSISDRKSKEWEERRRQNIEKMNEEMEKIAEYERNQREGVLEPNPVRNFLDDPRRRSGPLEESERDRREESRRHGRNWGGPDFERVRCGLEHERQGRRAGLGSAGDMTLSMTGRERSEYLRWKQEREKIDQERLQRHRKPTGQWRREWDAEKTDGMFKDGPVPAHEPSHRYDDQAWARPPKPPTFGEFLSQHKAEASSRRRRKSSRPQAKAAPRAYSDHDDRWETKEGAASPAPETPQPTSPETSPKETPMQPPEIPAPAHRPPEDEGEENEGEEDEEWEDISEDEEEEEIEVEEGDEEEPAQDHQAPEAAPTGIPCSEQAHGVPFSPEEPLLEPQAPGTPSSPFSPPSGHQPVSDWGEEVELNSPRTTHLAGALSPGEAWPFESV</sequence>
<organism>
    <name type="scientific">Homo sapiens</name>
    <name type="common">Human</name>
    <dbReference type="NCBI Taxonomy" id="9606"/>
    <lineage>
        <taxon>Eukaryota</taxon>
        <taxon>Metazoa</taxon>
        <taxon>Chordata</taxon>
        <taxon>Craniata</taxon>
        <taxon>Vertebrata</taxon>
        <taxon>Euteleostomi</taxon>
        <taxon>Mammalia</taxon>
        <taxon>Eutheria</taxon>
        <taxon>Euarchontoglires</taxon>
        <taxon>Primates</taxon>
        <taxon>Haplorrhini</taxon>
        <taxon>Catarrhini</taxon>
        <taxon>Hominidae</taxon>
        <taxon>Homo</taxon>
    </lineage>
</organism>
<accession>Q9Y3X0</accession>
<evidence type="ECO:0000250" key="1">
    <source>
        <dbReference type="UniProtKB" id="Q8VC31"/>
    </source>
</evidence>
<evidence type="ECO:0000255" key="2"/>
<evidence type="ECO:0000256" key="3">
    <source>
        <dbReference type="SAM" id="MobiDB-lite"/>
    </source>
</evidence>
<evidence type="ECO:0000269" key="4">
    <source>
    </source>
</evidence>
<evidence type="ECO:0000305" key="5"/>
<evidence type="ECO:0000305" key="6">
    <source>
    </source>
</evidence>
<evidence type="ECO:0000312" key="7">
    <source>
        <dbReference type="HGNC" id="HGNC:24560"/>
    </source>
</evidence>
<evidence type="ECO:0007744" key="8">
    <source>
    </source>
</evidence>
<evidence type="ECO:0007744" key="9">
    <source>
    </source>
</evidence>
<evidence type="ECO:0007744" key="10">
    <source>
    </source>
</evidence>
<evidence type="ECO:0007744" key="11">
    <source>
    </source>
</evidence>
<evidence type="ECO:0007744" key="12">
    <source>
    </source>
</evidence>
<evidence type="ECO:0007744" key="13">
    <source>
    </source>
</evidence>
<evidence type="ECO:0007744" key="14">
    <source>
    </source>
</evidence>
<proteinExistence type="evidence at protein level"/>
<comment type="function">
    <text evidence="6">Probable component of the exon junction complex (EJC), a multiprotein complex that associates immediately upstream of the exon-exon junction on mRNAs and serves as a positional landmark for the intron exon structure of genes and directs post-transcriptional processes in the cytoplasm such as mRNA export, nonsense-mediated mRNA decay (NMD) or translation.</text>
</comment>
<comment type="subunit">
    <text evidence="4">Probable component of the exon junction complex (EJC); the association is RNA-dependent.</text>
</comment>
<comment type="interaction">
    <interactant intactId="EBI-2557532">
        <id>Q9Y3X0</id>
    </interactant>
    <interactant intactId="EBI-349854">
        <id>P13569</id>
        <label>CFTR</label>
    </interactant>
    <organismsDiffer>false</organismsDiffer>
    <experiments>4</experiments>
</comment>
<comment type="interaction">
    <interactant intactId="EBI-2557532">
        <id>Q9Y3X0</id>
    </interactant>
    <interactant intactId="EBI-466029">
        <id>P42858</id>
        <label>HTT</label>
    </interactant>
    <organismsDiffer>false</organismsDiffer>
    <experiments>3</experiments>
</comment>
<comment type="interaction">
    <interactant intactId="EBI-2557532">
        <id>Q9Y3X0</id>
    </interactant>
    <interactant intactId="EBI-10975473">
        <id>O60333-2</id>
        <label>KIF1B</label>
    </interactant>
    <organismsDiffer>false</organismsDiffer>
    <experiments>3</experiments>
</comment>
<comment type="interaction">
    <interactant intactId="EBI-2557532">
        <id>Q9Y3X0</id>
    </interactant>
    <interactant intactId="EBI-717399">
        <id>Q9BSI4</id>
        <label>TINF2</label>
    </interactant>
    <organismsDiffer>false</organismsDiffer>
    <experiments>2</experiments>
</comment>
<comment type="interaction">
    <interactant intactId="EBI-2557532">
        <id>Q9Y3X0</id>
    </interactant>
    <interactant intactId="EBI-720609">
        <id>O76024</id>
        <label>WFS1</label>
    </interactant>
    <organismsDiffer>false</organismsDiffer>
    <experiments>3</experiments>
</comment>
<gene>
    <name evidence="7" type="primary">CCDC9</name>
</gene>
<keyword id="KW-0175">Coiled coil</keyword>
<keyword id="KW-0488">Methylation</keyword>
<keyword id="KW-0597">Phosphoprotein</keyword>
<keyword id="KW-1267">Proteomics identification</keyword>
<keyword id="KW-1185">Reference proteome</keyword>